<comment type="function">
    <text evidence="1">Mediator of diverse signals that repress RNA polymerase III transcription. Inhibits the de novo assembly of TFIIIB onto DNA (By similarity).</text>
</comment>
<comment type="subcellular location">
    <subcellularLocation>
        <location evidence="1">Nucleus</location>
    </subcellularLocation>
</comment>
<comment type="similarity">
    <text evidence="3">Belongs to the MAF1 family.</text>
</comment>
<accession>Q757K3</accession>
<dbReference type="EMBL" id="AE016818">
    <property type="protein sequence ID" value="AAS52693.1"/>
    <property type="molecule type" value="Genomic_DNA"/>
</dbReference>
<dbReference type="RefSeq" id="NP_984869.1">
    <property type="nucleotide sequence ID" value="NM_210223.1"/>
</dbReference>
<dbReference type="FunCoup" id="Q757K3">
    <property type="interactions" value="127"/>
</dbReference>
<dbReference type="STRING" id="284811.Q757K3"/>
<dbReference type="EnsemblFungi" id="AAS52693">
    <property type="protein sequence ID" value="AAS52693"/>
    <property type="gene ID" value="AGOS_AER009C"/>
</dbReference>
<dbReference type="GeneID" id="4621068"/>
<dbReference type="KEGG" id="ago:AGOS_AER009C"/>
<dbReference type="eggNOG" id="KOG3104">
    <property type="taxonomic scope" value="Eukaryota"/>
</dbReference>
<dbReference type="HOGENOM" id="CLU_037043_2_1_1"/>
<dbReference type="InParanoid" id="Q757K3"/>
<dbReference type="OMA" id="INIGPFG"/>
<dbReference type="OrthoDB" id="277029at2759"/>
<dbReference type="Proteomes" id="UP000000591">
    <property type="component" value="Chromosome V"/>
</dbReference>
<dbReference type="GO" id="GO:0005737">
    <property type="term" value="C:cytoplasm"/>
    <property type="evidence" value="ECO:0007669"/>
    <property type="project" value="EnsemblFungi"/>
</dbReference>
<dbReference type="GO" id="GO:0005730">
    <property type="term" value="C:nucleolus"/>
    <property type="evidence" value="ECO:0007669"/>
    <property type="project" value="EnsemblFungi"/>
</dbReference>
<dbReference type="GO" id="GO:0005634">
    <property type="term" value="C:nucleus"/>
    <property type="evidence" value="ECO:0000318"/>
    <property type="project" value="GO_Central"/>
</dbReference>
<dbReference type="GO" id="GO:0000994">
    <property type="term" value="F:RNA polymerase III core binding"/>
    <property type="evidence" value="ECO:0000318"/>
    <property type="project" value="GO_Central"/>
</dbReference>
<dbReference type="GO" id="GO:0016480">
    <property type="term" value="P:negative regulation of transcription by RNA polymerase III"/>
    <property type="evidence" value="ECO:0000318"/>
    <property type="project" value="GO_Central"/>
</dbReference>
<dbReference type="Gene3D" id="3.40.1000.50">
    <property type="entry name" value="Repressor of RNA polymerase III transcription Maf1"/>
    <property type="match status" value="1"/>
</dbReference>
<dbReference type="InterPro" id="IPR015257">
    <property type="entry name" value="Maf1"/>
</dbReference>
<dbReference type="InterPro" id="IPR038564">
    <property type="entry name" value="Maf1_sf"/>
</dbReference>
<dbReference type="PANTHER" id="PTHR22504">
    <property type="entry name" value="REPRESSOR OF RNA POLYMERASE III TRANSCRIPTION MAF1"/>
    <property type="match status" value="1"/>
</dbReference>
<dbReference type="PANTHER" id="PTHR22504:SF0">
    <property type="entry name" value="REPRESSOR OF RNA POLYMERASE III TRANSCRIPTION MAF1 HOMOLOG"/>
    <property type="match status" value="1"/>
</dbReference>
<dbReference type="Pfam" id="PF09174">
    <property type="entry name" value="Maf1"/>
    <property type="match status" value="1"/>
</dbReference>
<protein>
    <recommendedName>
        <fullName>Repressor of RNA polymerase III transcription MAF1</fullName>
    </recommendedName>
</protein>
<gene>
    <name type="primary">MAF1</name>
    <name type="ordered locus">AER009C</name>
</gene>
<evidence type="ECO:0000250" key="1"/>
<evidence type="ECO:0000256" key="2">
    <source>
        <dbReference type="SAM" id="MobiDB-lite"/>
    </source>
</evidence>
<evidence type="ECO:0000305" key="3"/>
<organism>
    <name type="scientific">Eremothecium gossypii (strain ATCC 10895 / CBS 109.51 / FGSC 9923 / NRRL Y-1056)</name>
    <name type="common">Yeast</name>
    <name type="synonym">Ashbya gossypii</name>
    <dbReference type="NCBI Taxonomy" id="284811"/>
    <lineage>
        <taxon>Eukaryota</taxon>
        <taxon>Fungi</taxon>
        <taxon>Dikarya</taxon>
        <taxon>Ascomycota</taxon>
        <taxon>Saccharomycotina</taxon>
        <taxon>Saccharomycetes</taxon>
        <taxon>Saccharomycetales</taxon>
        <taxon>Saccharomycetaceae</taxon>
        <taxon>Eremothecium</taxon>
    </lineage>
</organism>
<proteinExistence type="inferred from homology"/>
<reference key="1">
    <citation type="journal article" date="2004" name="Science">
        <title>The Ashbya gossypii genome as a tool for mapping the ancient Saccharomyces cerevisiae genome.</title>
        <authorList>
            <person name="Dietrich F.S."/>
            <person name="Voegeli S."/>
            <person name="Brachat S."/>
            <person name="Lerch A."/>
            <person name="Gates K."/>
            <person name="Steiner S."/>
            <person name="Mohr C."/>
            <person name="Poehlmann R."/>
            <person name="Luedi P."/>
            <person name="Choi S."/>
            <person name="Wing R.A."/>
            <person name="Flavier A."/>
            <person name="Gaffney T.D."/>
            <person name="Philippsen P."/>
        </authorList>
    </citation>
    <scope>NUCLEOTIDE SEQUENCE [LARGE SCALE GENOMIC DNA]</scope>
    <source>
        <strain>ATCC 10895 / CBS 109.51 / FGSC 9923 / NRRL Y-1056</strain>
    </source>
</reference>
<reference key="2">
    <citation type="journal article" date="2013" name="G3 (Bethesda)">
        <title>Genomes of Ashbya fungi isolated from insects reveal four mating-type loci, numerous translocations, lack of transposons, and distinct gene duplications.</title>
        <authorList>
            <person name="Dietrich F.S."/>
            <person name="Voegeli S."/>
            <person name="Kuo S."/>
            <person name="Philippsen P."/>
        </authorList>
    </citation>
    <scope>GENOME REANNOTATION</scope>
    <source>
        <strain>ATCC 10895 / CBS 109.51 / FGSC 9923 / NRRL Y-1056</strain>
    </source>
</reference>
<feature type="chain" id="PRO_0000213970" description="Repressor of RNA polymerase III transcription MAF1">
    <location>
        <begin position="1"/>
        <end position="397"/>
    </location>
</feature>
<feature type="region of interest" description="Disordered" evidence="2">
    <location>
        <begin position="72"/>
        <end position="195"/>
    </location>
</feature>
<feature type="region of interest" description="Disordered" evidence="2">
    <location>
        <begin position="374"/>
        <end position="397"/>
    </location>
</feature>
<feature type="compositionally biased region" description="Polar residues" evidence="2">
    <location>
        <begin position="120"/>
        <end position="129"/>
    </location>
</feature>
<feature type="compositionally biased region" description="Polar residues" evidence="2">
    <location>
        <begin position="159"/>
        <end position="174"/>
    </location>
</feature>
<feature type="compositionally biased region" description="Polar residues" evidence="2">
    <location>
        <begin position="181"/>
        <end position="191"/>
    </location>
</feature>
<feature type="compositionally biased region" description="Acidic residues" evidence="2">
    <location>
        <begin position="385"/>
        <end position="397"/>
    </location>
</feature>
<sequence>MKFIDELDLELVNQTLNFETSESKISGGCDIFTTKPVASDKKLYKTIDRHLESLLQENESYNAAIQQQIELENKRRDPKQAGSDCAEPAEDSPTRNANSFWEQKRRMSVSESPRADTSPLFKSQKLNDQQLKELVSHPLEVPGCKSPSNETSARGVLRRSTSAGSFENNAGSAEQQKRRTSSIGSAANGTKSPILRRSSFNRETINIGPFGPISETASRRTFAYLIGILNASYPDHDFASLKPTDFVKSSRKQLVSKFENSIIALGKQPQEWIWETINAHMDLADCVFYQYNPQESFLDDEPGHLWSLMWFMFNKKRKRVAYFYLSAFRVKNPPSTGGSVALDEYYDSNSKPELREKRRRLTIEHETNDFEGEYDLTYTSSGDGAVEDEDEDMNDAD</sequence>
<name>MAF1_EREGS</name>
<keyword id="KW-0539">Nucleus</keyword>
<keyword id="KW-1185">Reference proteome</keyword>
<keyword id="KW-0678">Repressor</keyword>
<keyword id="KW-0804">Transcription</keyword>
<keyword id="KW-0805">Transcription regulation</keyword>